<proteinExistence type="inferred from homology"/>
<gene>
    <name evidence="4" type="primary">aunA</name>
    <name type="ORF">An01g14980</name>
</gene>
<reference key="1">
    <citation type="journal article" date="2007" name="Nat. Biotechnol.">
        <title>Genome sequencing and analysis of the versatile cell factory Aspergillus niger CBS 513.88.</title>
        <authorList>
            <person name="Pel H.J."/>
            <person name="de Winde J.H."/>
            <person name="Archer D.B."/>
            <person name="Dyer P.S."/>
            <person name="Hofmann G."/>
            <person name="Schaap P.J."/>
            <person name="Turner G."/>
            <person name="de Vries R.P."/>
            <person name="Albang R."/>
            <person name="Albermann K."/>
            <person name="Andersen M.R."/>
            <person name="Bendtsen J.D."/>
            <person name="Benen J.A.E."/>
            <person name="van den Berg M."/>
            <person name="Breestraat S."/>
            <person name="Caddick M.X."/>
            <person name="Contreras R."/>
            <person name="Cornell M."/>
            <person name="Coutinho P.M."/>
            <person name="Danchin E.G.J."/>
            <person name="Debets A.J.M."/>
            <person name="Dekker P."/>
            <person name="van Dijck P.W.M."/>
            <person name="van Dijk A."/>
            <person name="Dijkhuizen L."/>
            <person name="Driessen A.J.M."/>
            <person name="d'Enfert C."/>
            <person name="Geysens S."/>
            <person name="Goosen C."/>
            <person name="Groot G.S.P."/>
            <person name="de Groot P.W.J."/>
            <person name="Guillemette T."/>
            <person name="Henrissat B."/>
            <person name="Herweijer M."/>
            <person name="van den Hombergh J.P.T.W."/>
            <person name="van den Hondel C.A.M.J.J."/>
            <person name="van der Heijden R.T.J.M."/>
            <person name="van der Kaaij R.M."/>
            <person name="Klis F.M."/>
            <person name="Kools H.J."/>
            <person name="Kubicek C.P."/>
            <person name="van Kuyk P.A."/>
            <person name="Lauber J."/>
            <person name="Lu X."/>
            <person name="van der Maarel M.J.E.C."/>
            <person name="Meulenberg R."/>
            <person name="Menke H."/>
            <person name="Mortimer M.A."/>
            <person name="Nielsen J."/>
            <person name="Oliver S.G."/>
            <person name="Olsthoorn M."/>
            <person name="Pal K."/>
            <person name="van Peij N.N.M.E."/>
            <person name="Ram A.F.J."/>
            <person name="Rinas U."/>
            <person name="Roubos J.A."/>
            <person name="Sagt C.M.J."/>
            <person name="Schmoll M."/>
            <person name="Sun J."/>
            <person name="Ussery D."/>
            <person name="Varga J."/>
            <person name="Vervecken W."/>
            <person name="van de Vondervoort P.J.J."/>
            <person name="Wedler H."/>
            <person name="Woesten H.A.B."/>
            <person name="Zeng A.-P."/>
            <person name="van Ooyen A.J.J."/>
            <person name="Visser J."/>
            <person name="Stam H."/>
        </authorList>
    </citation>
    <scope>NUCLEOTIDE SEQUENCE [LARGE SCALE GENOMIC DNA]</scope>
    <source>
        <strain>ATCC MYA-4892 / CBS 513.88 / FGSC A1513</strain>
    </source>
</reference>
<reference key="2">
    <citation type="journal article" date="2019" name="Biochemistry">
        <title>Biaryl-forming enzymes from Aspergilli exhibit substrate-dependent stereoselectivity.</title>
        <authorList>
            <person name="Obermaier S."/>
            <person name="Mueller M."/>
        </authorList>
    </citation>
    <scope>FUNCTION</scope>
    <scope>PATHWAY</scope>
</reference>
<feature type="signal peptide" evidence="1">
    <location>
        <begin position="1"/>
        <end position="26"/>
    </location>
</feature>
<feature type="chain" id="PRO_5002644895" description="Aurasperone B biosynthesis cluster protein A">
    <location>
        <begin position="27"/>
        <end position="305"/>
    </location>
</feature>
<feature type="glycosylation site" description="N-linked (GlcNAc...) asparagine" evidence="2">
    <location>
        <position position="29"/>
    </location>
</feature>
<feature type="glycosylation site" description="N-linked (GlcNAc...) asparagine" evidence="2">
    <location>
        <position position="34"/>
    </location>
</feature>
<feature type="glycosylation site" description="N-linked (GlcNAc...) asparagine" evidence="2">
    <location>
        <position position="64"/>
    </location>
</feature>
<feature type="glycosylation site" description="N-linked (GlcNAc...) asparagine" evidence="2">
    <location>
        <position position="83"/>
    </location>
</feature>
<feature type="glycosylation site" description="N-linked (GlcNAc...) asparagine" evidence="2">
    <location>
        <position position="132"/>
    </location>
</feature>
<feature type="glycosylation site" description="N-linked (GlcNAc...) asparagine" evidence="2">
    <location>
        <position position="183"/>
    </location>
</feature>
<feature type="glycosylation site" description="N-linked (GlcNAc...) asparagine" evidence="2">
    <location>
        <position position="218"/>
    </location>
</feature>
<feature type="glycosylation site" description="N-linked (GlcNAc...) asparagine" evidence="2">
    <location>
        <position position="288"/>
    </location>
</feature>
<protein>
    <recommendedName>
        <fullName evidence="4">Aurasperone B biosynthesis cluster protein A</fullName>
    </recommendedName>
</protein>
<evidence type="ECO:0000255" key="1"/>
<evidence type="ECO:0000255" key="2">
    <source>
        <dbReference type="PROSITE-ProRule" id="PRU00498"/>
    </source>
</evidence>
<evidence type="ECO:0000269" key="3">
    <source>
    </source>
</evidence>
<evidence type="ECO:0000303" key="4">
    <source>
    </source>
</evidence>
<evidence type="ECO:0000305" key="5"/>
<evidence type="ECO:0000305" key="6">
    <source>
    </source>
</evidence>
<name>AUNA_ASPNC</name>
<keyword id="KW-0325">Glycoprotein</keyword>
<keyword id="KW-1185">Reference proteome</keyword>
<keyword id="KW-0732">Signal</keyword>
<accession>A2QBE7</accession>
<sequence length="305" mass="34027">MSIFFSIRFWPAAISAAILWLPQVLGRSNGTAPNYTVEELWKLETTFWDNFLYPANVEQMEAINSTLFTQDVQGRVDITRVFNGSELNTEYIFGLFSDPDHVSLVGVPVDYSITQFIAQGNIASATTVVTFNATSFGNLLVPVTIDTWIMWDADGRIMQYDATFRWFGFLLDTLVEALAESINGTTSQATASLTQLLATTICATHDQYCTGSNQQYDNNTACLDFLTSAIPLGKDYELGRNTLLCREVHEHMVQYDPALHCPHIGPTGGDYCVDDQTYAQKVLQKYFNQSWIVGVPSTGDIWLGD</sequence>
<organism>
    <name type="scientific">Aspergillus niger (strain ATCC MYA-4892 / CBS 513.88 / FGSC A1513)</name>
    <dbReference type="NCBI Taxonomy" id="425011"/>
    <lineage>
        <taxon>Eukaryota</taxon>
        <taxon>Fungi</taxon>
        <taxon>Dikarya</taxon>
        <taxon>Ascomycota</taxon>
        <taxon>Pezizomycotina</taxon>
        <taxon>Eurotiomycetes</taxon>
        <taxon>Eurotiomycetidae</taxon>
        <taxon>Eurotiales</taxon>
        <taxon>Aspergillaceae</taxon>
        <taxon>Aspergillus</taxon>
        <taxon>Aspergillus subgen. Circumdati</taxon>
    </lineage>
</organism>
<dbReference type="EMBL" id="AM269994">
    <property type="protein sequence ID" value="CAK37452.1"/>
    <property type="molecule type" value="Genomic_DNA"/>
</dbReference>
<dbReference type="RefSeq" id="XP_001389886.1">
    <property type="nucleotide sequence ID" value="XM_001389849.1"/>
</dbReference>
<dbReference type="GlyCosmos" id="A2QBE7">
    <property type="glycosylation" value="8 sites, No reported glycans"/>
</dbReference>
<dbReference type="EnsemblFungi" id="CAK37452">
    <property type="protein sequence ID" value="CAK37452"/>
    <property type="gene ID" value="An01g14980"/>
</dbReference>
<dbReference type="GeneID" id="4978036"/>
<dbReference type="KEGG" id="ang:An01g14980"/>
<dbReference type="VEuPathDB" id="FungiDB:An01g14980"/>
<dbReference type="HOGENOM" id="CLU_072152_0_0_1"/>
<dbReference type="Proteomes" id="UP000006706">
    <property type="component" value="Chromosome 2R"/>
</dbReference>
<comment type="function">
    <text evidence="3 6">Part of the gene cluster that mediates the biosynthesis of aurasperone B, a dimeric gamma-naphthopyrone (PubMed:31067027). The first step in the biosynthesis of aurasperone B is the production of gamma-naphthopyrone precursor YWA1 by the non-reducing polyketide synthase albA, via condensation of one acetyl-CoA starter unit with 6 malonyl-CoA units (PubMed:31067027). YWA1 is then methylated by aunE at position C-6 to yield foncesin which is further methylated at position C-8 by aunD to produce fonsecin B (Probable). A key enzyme in the biosynthetic pathway is the cytochrome P450 monooxygenase aunB which catalyzes the oxidative dimerization of fonsecin B to aurasperone B (PubMed:31067027). AunB also catalyzes the oxidative dimerization of rubrofusarin B into aurasperone A (PubMed:31067027).</text>
</comment>
<comment type="similarity">
    <text evidence="5">Belongs to the bfoA family.</text>
</comment>